<reference key="1">
    <citation type="journal article" date="2006" name="Gene">
        <title>Adaptive selection of mitochondrial complex I subunits during primate radiation.</title>
        <authorList>
            <person name="Mishmar D."/>
            <person name="Ruiz-Pesini E."/>
            <person name="Mondragon-Palomino M."/>
            <person name="Procaccio V."/>
            <person name="Gaut B."/>
            <person name="Wallace D.C."/>
        </authorList>
    </citation>
    <scope>NUCLEOTIDE SEQUENCE [MRNA]</scope>
</reference>
<gene>
    <name type="primary">NDUFB9</name>
</gene>
<dbReference type="EMBL" id="DQ885686">
    <property type="protein sequence ID" value="ABH12195.1"/>
    <property type="molecule type" value="mRNA"/>
</dbReference>
<dbReference type="SMR" id="Q0MQE8"/>
<dbReference type="FunCoup" id="Q0MQE8">
    <property type="interactions" value="1624"/>
</dbReference>
<dbReference type="STRING" id="9601.ENSPPYP00000021170"/>
<dbReference type="eggNOG" id="KOG3466">
    <property type="taxonomic scope" value="Eukaryota"/>
</dbReference>
<dbReference type="InParanoid" id="Q0MQE8"/>
<dbReference type="OrthoDB" id="13598at2759"/>
<dbReference type="Proteomes" id="UP000001595">
    <property type="component" value="Unplaced"/>
</dbReference>
<dbReference type="GO" id="GO:0005743">
    <property type="term" value="C:mitochondrial inner membrane"/>
    <property type="evidence" value="ECO:0007669"/>
    <property type="project" value="UniProtKB-SubCell"/>
</dbReference>
<dbReference type="GO" id="GO:0045271">
    <property type="term" value="C:respiratory chain complex I"/>
    <property type="evidence" value="ECO:0000250"/>
    <property type="project" value="UniProtKB"/>
</dbReference>
<dbReference type="GO" id="GO:0006120">
    <property type="term" value="P:mitochondrial electron transport, NADH to ubiquinone"/>
    <property type="evidence" value="ECO:0007669"/>
    <property type="project" value="InterPro"/>
</dbReference>
<dbReference type="CDD" id="cd20263">
    <property type="entry name" value="Complex1_LYR_NDUFB9_LYRM3"/>
    <property type="match status" value="1"/>
</dbReference>
<dbReference type="InterPro" id="IPR008011">
    <property type="entry name" value="Complex1_LYR_dom"/>
</dbReference>
<dbReference type="InterPro" id="IPR045292">
    <property type="entry name" value="Complex1_LYR_NDUFB9_LYRM3"/>
</dbReference>
<dbReference type="InterPro" id="IPR033034">
    <property type="entry name" value="NDUFB9"/>
</dbReference>
<dbReference type="PANTHER" id="PTHR12868:SF1">
    <property type="entry name" value="NADH DEHYDROGENASE [UBIQUINONE] 1 BETA SUBCOMPLEX SUBUNIT 9"/>
    <property type="match status" value="1"/>
</dbReference>
<dbReference type="PANTHER" id="PTHR12868">
    <property type="entry name" value="NADH-UBIQUINONE OXIDOREDUCTASE B22 SUBUNIT"/>
    <property type="match status" value="1"/>
</dbReference>
<dbReference type="Pfam" id="PF05347">
    <property type="entry name" value="Complex1_LYR"/>
    <property type="match status" value="1"/>
</dbReference>
<organism>
    <name type="scientific">Pongo abelii</name>
    <name type="common">Sumatran orangutan</name>
    <name type="synonym">Pongo pygmaeus abelii</name>
    <dbReference type="NCBI Taxonomy" id="9601"/>
    <lineage>
        <taxon>Eukaryota</taxon>
        <taxon>Metazoa</taxon>
        <taxon>Chordata</taxon>
        <taxon>Craniata</taxon>
        <taxon>Vertebrata</taxon>
        <taxon>Euteleostomi</taxon>
        <taxon>Mammalia</taxon>
        <taxon>Eutheria</taxon>
        <taxon>Euarchontoglires</taxon>
        <taxon>Primates</taxon>
        <taxon>Haplorrhini</taxon>
        <taxon>Catarrhini</taxon>
        <taxon>Hominidae</taxon>
        <taxon>Pongo</taxon>
    </lineage>
</organism>
<proteinExistence type="evidence at transcript level"/>
<protein>
    <recommendedName>
        <fullName>NADH dehydrogenase [ubiquinone] 1 beta subcomplex subunit 9</fullName>
    </recommendedName>
    <alternativeName>
        <fullName>Complex I-B22</fullName>
        <shortName>CI-B22</shortName>
    </alternativeName>
    <alternativeName>
        <fullName>NADH-ubiquinone oxidoreductase B22 subunit</fullName>
    </alternativeName>
</protein>
<accession>Q0MQE8</accession>
<keyword id="KW-0007">Acetylation</keyword>
<keyword id="KW-0249">Electron transport</keyword>
<keyword id="KW-0472">Membrane</keyword>
<keyword id="KW-0496">Mitochondrion</keyword>
<keyword id="KW-0999">Mitochondrion inner membrane</keyword>
<keyword id="KW-0597">Phosphoprotein</keyword>
<keyword id="KW-1185">Reference proteome</keyword>
<keyword id="KW-0679">Respiratory chain</keyword>
<keyword id="KW-0813">Transport</keyword>
<evidence type="ECO:0000250" key="1">
    <source>
        <dbReference type="UniProtKB" id="Q9Y6M9"/>
    </source>
</evidence>
<evidence type="ECO:0000256" key="2">
    <source>
        <dbReference type="SAM" id="MobiDB-lite"/>
    </source>
</evidence>
<evidence type="ECO:0000305" key="3"/>
<feature type="initiator methionine" description="Removed" evidence="1">
    <location>
        <position position="1"/>
    </location>
</feature>
<feature type="chain" id="PRO_0000251173" description="NADH dehydrogenase [ubiquinone] 1 beta subcomplex subunit 9">
    <location>
        <begin position="2"/>
        <end position="179"/>
    </location>
</feature>
<feature type="region of interest" description="Disordered" evidence="2">
    <location>
        <begin position="136"/>
        <end position="162"/>
    </location>
</feature>
<feature type="modified residue" description="N-acetylalanine" evidence="1">
    <location>
        <position position="2"/>
    </location>
</feature>
<feature type="modified residue" description="Phosphoserine" evidence="1">
    <location>
        <position position="85"/>
    </location>
</feature>
<comment type="function">
    <text evidence="1">Accessory subunit of the mitochondrial membrane respiratory chain NADH dehydrogenase (Complex I), that is believed to be not involved in catalysis. Complex I functions in the transfer of electrons from NADH to the respiratory chain. The immediate electron acceptor for the enzyme is believed to be ubiquinone.</text>
</comment>
<comment type="subunit">
    <text evidence="1">Mammalian complex I is composed of 45 different subunits.</text>
</comment>
<comment type="subcellular location">
    <subcellularLocation>
        <location evidence="1">Mitochondrion inner membrane</location>
        <topology evidence="1">Peripheral membrane protein</topology>
        <orientation evidence="1">Matrix side</orientation>
    </subcellularLocation>
</comment>
<comment type="similarity">
    <text evidence="3">Belongs to the complex I LYR family.</text>
</comment>
<name>NDUB9_PONAB</name>
<sequence length="179" mass="21861">MAFLASGAYLTHRQKVLRLYKRALRHLESWCVQRDKYRYFACLMRARFEEHKNEKDMVRATQLLKEAEEEFWYRQHPQPYIFPDSPGGTSYERYDCYKVPEWCLDDWHPSEKAMYPDYFAKREQWKKLQRESWEREVKQLQEETPPGGPLTEALPPARKEGDLPPLWWYIVTRPRERPM</sequence>